<organism>
    <name type="scientific">Methanococcus vannielii (strain ATCC 35089 / DSM 1224 / JCM 13029 / OCM 148 / SB)</name>
    <dbReference type="NCBI Taxonomy" id="406327"/>
    <lineage>
        <taxon>Archaea</taxon>
        <taxon>Methanobacteriati</taxon>
        <taxon>Methanobacteriota</taxon>
        <taxon>Methanomada group</taxon>
        <taxon>Methanococci</taxon>
        <taxon>Methanococcales</taxon>
        <taxon>Methanococcaceae</taxon>
        <taxon>Methanococcus</taxon>
    </lineage>
</organism>
<feature type="chain" id="PRO_1000021703" description="Adenylate kinase">
    <location>
        <begin position="1"/>
        <end position="192"/>
    </location>
</feature>
<feature type="binding site" evidence="1">
    <location>
        <begin position="10"/>
        <end position="18"/>
    </location>
    <ligand>
        <name>ATP</name>
        <dbReference type="ChEBI" id="CHEBI:30616"/>
    </ligand>
</feature>
<keyword id="KW-0067">ATP-binding</keyword>
<keyword id="KW-0963">Cytoplasm</keyword>
<keyword id="KW-0418">Kinase</keyword>
<keyword id="KW-0547">Nucleotide-binding</keyword>
<keyword id="KW-0808">Transferase</keyword>
<sequence>MKNNVVVVTGVPGVGSTTVMQKAMDKLIEEKISYKMVNFGSMMFEVAKEEGLAEERDQMRKLNPETQKRIQKMAGRKIAELSKHSPVAVDTHSTVKTPKGYLPGLPAWVLNELNPDMVIVVETDGDEILMRRMGDESRNRDLETTKSIEEHQFMNRCAAMAYGVLTGATVKIVKNKNGLVDNAVEELISVLR</sequence>
<accession>A6UP41</accession>
<reference key="1">
    <citation type="submission" date="2007-06" db="EMBL/GenBank/DDBJ databases">
        <title>Complete sequence of Methanococcus vannielii SB.</title>
        <authorList>
            <consortium name="US DOE Joint Genome Institute"/>
            <person name="Copeland A."/>
            <person name="Lucas S."/>
            <person name="Lapidus A."/>
            <person name="Barry K."/>
            <person name="Glavina del Rio T."/>
            <person name="Dalin E."/>
            <person name="Tice H."/>
            <person name="Pitluck S."/>
            <person name="Chain P."/>
            <person name="Malfatti S."/>
            <person name="Shin M."/>
            <person name="Vergez L."/>
            <person name="Schmutz J."/>
            <person name="Larimer F."/>
            <person name="Land M."/>
            <person name="Hauser L."/>
            <person name="Kyrpides N."/>
            <person name="Anderson I."/>
            <person name="Sieprawska-Lupa M."/>
            <person name="Whitman W.B."/>
            <person name="Richardson P."/>
        </authorList>
    </citation>
    <scope>NUCLEOTIDE SEQUENCE [LARGE SCALE GENOMIC DNA]</scope>
    <source>
        <strain>ATCC 35089 / DSM 1224 / JCM 13029 / OCM 148 / SB</strain>
    </source>
</reference>
<comment type="catalytic activity">
    <reaction evidence="1">
        <text>AMP + ATP = 2 ADP</text>
        <dbReference type="Rhea" id="RHEA:12973"/>
        <dbReference type="ChEBI" id="CHEBI:30616"/>
        <dbReference type="ChEBI" id="CHEBI:456215"/>
        <dbReference type="ChEBI" id="CHEBI:456216"/>
        <dbReference type="EC" id="2.7.4.3"/>
    </reaction>
</comment>
<comment type="subunit">
    <text evidence="1">Monomer.</text>
</comment>
<comment type="subcellular location">
    <subcellularLocation>
        <location evidence="1">Cytoplasm</location>
    </subcellularLocation>
</comment>
<comment type="similarity">
    <text evidence="1">Belongs to the archaeal adenylate kinase family.</text>
</comment>
<protein>
    <recommendedName>
        <fullName evidence="1">Adenylate kinase</fullName>
        <shortName evidence="1">AK</shortName>
        <ecNumber evidence="1">2.7.4.3</ecNumber>
    </recommendedName>
    <alternativeName>
        <fullName evidence="1">ATP-AMP transphosphorylase</fullName>
    </alternativeName>
</protein>
<gene>
    <name evidence="1" type="primary">adkA</name>
    <name type="ordered locus">Mevan_0354</name>
</gene>
<proteinExistence type="inferred from homology"/>
<dbReference type="EC" id="2.7.4.3" evidence="1"/>
<dbReference type="EMBL" id="CP000742">
    <property type="protein sequence ID" value="ABR54263.1"/>
    <property type="molecule type" value="Genomic_DNA"/>
</dbReference>
<dbReference type="RefSeq" id="WP_011972166.1">
    <property type="nucleotide sequence ID" value="NC_009634.1"/>
</dbReference>
<dbReference type="SMR" id="A6UP41"/>
<dbReference type="STRING" id="406327.Mevan_0354"/>
<dbReference type="GeneID" id="5325860"/>
<dbReference type="KEGG" id="mvn:Mevan_0354"/>
<dbReference type="eggNOG" id="arCOG01039">
    <property type="taxonomic scope" value="Archaea"/>
</dbReference>
<dbReference type="HOGENOM" id="CLU_119371_0_0_2"/>
<dbReference type="OrthoDB" id="26198at2157"/>
<dbReference type="Proteomes" id="UP000001107">
    <property type="component" value="Chromosome"/>
</dbReference>
<dbReference type="GO" id="GO:0005737">
    <property type="term" value="C:cytoplasm"/>
    <property type="evidence" value="ECO:0007669"/>
    <property type="project" value="UniProtKB-SubCell"/>
</dbReference>
<dbReference type="GO" id="GO:0004017">
    <property type="term" value="F:adenylate kinase activity"/>
    <property type="evidence" value="ECO:0007669"/>
    <property type="project" value="UniProtKB-UniRule"/>
</dbReference>
<dbReference type="GO" id="GO:0005524">
    <property type="term" value="F:ATP binding"/>
    <property type="evidence" value="ECO:0007669"/>
    <property type="project" value="UniProtKB-UniRule"/>
</dbReference>
<dbReference type="Gene3D" id="3.40.50.300">
    <property type="entry name" value="P-loop containing nucleotide triphosphate hydrolases"/>
    <property type="match status" value="1"/>
</dbReference>
<dbReference type="HAMAP" id="MF_00234">
    <property type="entry name" value="Adenylate_kinase_AdkA"/>
    <property type="match status" value="1"/>
</dbReference>
<dbReference type="InterPro" id="IPR023477">
    <property type="entry name" value="Adenylate_kinase_AdkA"/>
</dbReference>
<dbReference type="InterPro" id="IPR027417">
    <property type="entry name" value="P-loop_NTPase"/>
</dbReference>
<dbReference type="NCBIfam" id="NF003122">
    <property type="entry name" value="PRK04040.1"/>
    <property type="match status" value="1"/>
</dbReference>
<dbReference type="Pfam" id="PF13207">
    <property type="entry name" value="AAA_17"/>
    <property type="match status" value="1"/>
</dbReference>
<dbReference type="SUPFAM" id="SSF52540">
    <property type="entry name" value="P-loop containing nucleoside triphosphate hydrolases"/>
    <property type="match status" value="1"/>
</dbReference>
<evidence type="ECO:0000255" key="1">
    <source>
        <dbReference type="HAMAP-Rule" id="MF_00234"/>
    </source>
</evidence>
<name>KADA_METVS</name>